<evidence type="ECO:0000255" key="1">
    <source>
        <dbReference type="HAMAP-Rule" id="MF_01343"/>
    </source>
</evidence>
<evidence type="ECO:0000305" key="2"/>
<proteinExistence type="inferred from homology"/>
<comment type="function">
    <text evidence="1">One of the primary rRNA binding proteins, it binds directly to 16S rRNA where it helps nucleate assembly of the platform of the 30S subunit by binding and bridging several RNA helices of the 16S rRNA.</text>
</comment>
<comment type="function">
    <text evidence="1">Forms an intersubunit bridge (bridge B4) with the 23S rRNA of the 50S subunit in the ribosome.</text>
</comment>
<comment type="subunit">
    <text evidence="1">Part of the 30S ribosomal subunit. Forms a bridge to the 50S subunit in the 70S ribosome, contacting the 23S rRNA.</text>
</comment>
<comment type="similarity">
    <text evidence="1">Belongs to the universal ribosomal protein uS15 family.</text>
</comment>
<reference key="1">
    <citation type="submission" date="2007-10" db="EMBL/GenBank/DDBJ databases">
        <title>Complete sequence of Salinispora arenicola CNS-205.</title>
        <authorList>
            <consortium name="US DOE Joint Genome Institute"/>
            <person name="Copeland A."/>
            <person name="Lucas S."/>
            <person name="Lapidus A."/>
            <person name="Barry K."/>
            <person name="Glavina del Rio T."/>
            <person name="Dalin E."/>
            <person name="Tice H."/>
            <person name="Pitluck S."/>
            <person name="Foster B."/>
            <person name="Schmutz J."/>
            <person name="Larimer F."/>
            <person name="Land M."/>
            <person name="Hauser L."/>
            <person name="Kyrpides N."/>
            <person name="Ivanova N."/>
            <person name="Jensen P.R."/>
            <person name="Moore B.S."/>
            <person name="Penn K."/>
            <person name="Jenkins C."/>
            <person name="Udwary D."/>
            <person name="Xiang L."/>
            <person name="Gontang E."/>
            <person name="Richardson P."/>
        </authorList>
    </citation>
    <scope>NUCLEOTIDE SEQUENCE [LARGE SCALE GENOMIC DNA]</scope>
    <source>
        <strain>CNS-205</strain>
    </source>
</reference>
<keyword id="KW-0687">Ribonucleoprotein</keyword>
<keyword id="KW-0689">Ribosomal protein</keyword>
<keyword id="KW-0694">RNA-binding</keyword>
<keyword id="KW-0699">rRNA-binding</keyword>
<organism>
    <name type="scientific">Salinispora arenicola (strain CNS-205)</name>
    <dbReference type="NCBI Taxonomy" id="391037"/>
    <lineage>
        <taxon>Bacteria</taxon>
        <taxon>Bacillati</taxon>
        <taxon>Actinomycetota</taxon>
        <taxon>Actinomycetes</taxon>
        <taxon>Micromonosporales</taxon>
        <taxon>Micromonosporaceae</taxon>
        <taxon>Salinispora</taxon>
    </lineage>
</organism>
<gene>
    <name evidence="1" type="primary">rpsO</name>
    <name type="ordered locus">Sare_1338</name>
</gene>
<protein>
    <recommendedName>
        <fullName evidence="1">Small ribosomal subunit protein uS15</fullName>
    </recommendedName>
    <alternativeName>
        <fullName evidence="2">30S ribosomal protein S15</fullName>
    </alternativeName>
</protein>
<accession>A8M757</accession>
<sequence>MALDQQAKAKIRAEYATVEGDTGSPEVQVAVLTKRIADLTEHLKVHKHDHHSRRGLLLLVGRRRRLLNYVQKRDINRYRSLIERLGLRR</sequence>
<feature type="chain" id="PRO_1000086816" description="Small ribosomal subunit protein uS15">
    <location>
        <begin position="1"/>
        <end position="89"/>
    </location>
</feature>
<dbReference type="EMBL" id="CP000850">
    <property type="protein sequence ID" value="ABV97239.1"/>
    <property type="molecule type" value="Genomic_DNA"/>
</dbReference>
<dbReference type="SMR" id="A8M757"/>
<dbReference type="STRING" id="391037.Sare_1338"/>
<dbReference type="KEGG" id="saq:Sare_1338"/>
<dbReference type="PATRIC" id="fig|391037.6.peg.1360"/>
<dbReference type="eggNOG" id="COG0184">
    <property type="taxonomic scope" value="Bacteria"/>
</dbReference>
<dbReference type="HOGENOM" id="CLU_148518_0_0_11"/>
<dbReference type="OrthoDB" id="9799262at2"/>
<dbReference type="GO" id="GO:0022627">
    <property type="term" value="C:cytosolic small ribosomal subunit"/>
    <property type="evidence" value="ECO:0007669"/>
    <property type="project" value="TreeGrafter"/>
</dbReference>
<dbReference type="GO" id="GO:0019843">
    <property type="term" value="F:rRNA binding"/>
    <property type="evidence" value="ECO:0007669"/>
    <property type="project" value="UniProtKB-UniRule"/>
</dbReference>
<dbReference type="GO" id="GO:0003735">
    <property type="term" value="F:structural constituent of ribosome"/>
    <property type="evidence" value="ECO:0007669"/>
    <property type="project" value="InterPro"/>
</dbReference>
<dbReference type="GO" id="GO:0006412">
    <property type="term" value="P:translation"/>
    <property type="evidence" value="ECO:0007669"/>
    <property type="project" value="UniProtKB-UniRule"/>
</dbReference>
<dbReference type="CDD" id="cd00353">
    <property type="entry name" value="Ribosomal_S15p_S13e"/>
    <property type="match status" value="1"/>
</dbReference>
<dbReference type="FunFam" id="1.10.287.10:FF:000002">
    <property type="entry name" value="30S ribosomal protein S15"/>
    <property type="match status" value="1"/>
</dbReference>
<dbReference type="Gene3D" id="6.10.250.3130">
    <property type="match status" value="1"/>
</dbReference>
<dbReference type="Gene3D" id="1.10.287.10">
    <property type="entry name" value="S15/NS1, RNA-binding"/>
    <property type="match status" value="1"/>
</dbReference>
<dbReference type="HAMAP" id="MF_01343_B">
    <property type="entry name" value="Ribosomal_uS15_B"/>
    <property type="match status" value="1"/>
</dbReference>
<dbReference type="InterPro" id="IPR000589">
    <property type="entry name" value="Ribosomal_uS15"/>
</dbReference>
<dbReference type="InterPro" id="IPR005290">
    <property type="entry name" value="Ribosomal_uS15_bac-type"/>
</dbReference>
<dbReference type="InterPro" id="IPR009068">
    <property type="entry name" value="uS15_NS1_RNA-bd_sf"/>
</dbReference>
<dbReference type="NCBIfam" id="TIGR00952">
    <property type="entry name" value="S15_bact"/>
    <property type="match status" value="1"/>
</dbReference>
<dbReference type="PANTHER" id="PTHR23321">
    <property type="entry name" value="RIBOSOMAL PROTEIN S15, BACTERIAL AND ORGANELLAR"/>
    <property type="match status" value="1"/>
</dbReference>
<dbReference type="PANTHER" id="PTHR23321:SF26">
    <property type="entry name" value="SMALL RIBOSOMAL SUBUNIT PROTEIN US15M"/>
    <property type="match status" value="1"/>
</dbReference>
<dbReference type="Pfam" id="PF00312">
    <property type="entry name" value="Ribosomal_S15"/>
    <property type="match status" value="1"/>
</dbReference>
<dbReference type="SMART" id="SM01387">
    <property type="entry name" value="Ribosomal_S15"/>
    <property type="match status" value="1"/>
</dbReference>
<dbReference type="SUPFAM" id="SSF47060">
    <property type="entry name" value="S15/NS1 RNA-binding domain"/>
    <property type="match status" value="1"/>
</dbReference>
<dbReference type="PROSITE" id="PS00362">
    <property type="entry name" value="RIBOSOMAL_S15"/>
    <property type="match status" value="1"/>
</dbReference>
<name>RS15_SALAI</name>